<gene>
    <name type="ordered locus">MPN_337</name>
    <name type="ORF">F10_orf621</name>
    <name type="ORF">MP499</name>
</gene>
<accession>P75441</accession>
<reference key="1">
    <citation type="journal article" date="1996" name="Nucleic Acids Res.">
        <title>Complete sequence analysis of the genome of the bacterium Mycoplasma pneumoniae.</title>
        <authorList>
            <person name="Himmelreich R."/>
            <person name="Hilbert H."/>
            <person name="Plagens H."/>
            <person name="Pirkl E."/>
            <person name="Li B.-C."/>
            <person name="Herrmann R."/>
        </authorList>
    </citation>
    <scope>NUCLEOTIDE SEQUENCE [LARGE SCALE GENOMIC DNA]</scope>
    <source>
        <strain>ATCC 29342 / M129 / Subtype 1</strain>
    </source>
</reference>
<feature type="chain" id="PRO_0000210480" description="Uncharacterized protein MG241 homolog">
    <location>
        <begin position="1"/>
        <end position="621"/>
    </location>
</feature>
<feature type="transmembrane region" description="Helical" evidence="1">
    <location>
        <begin position="240"/>
        <end position="260"/>
    </location>
</feature>
<feature type="transmembrane region" description="Helical" evidence="1">
    <location>
        <begin position="548"/>
        <end position="568"/>
    </location>
</feature>
<feature type="transmembrane region" description="Helical" evidence="1">
    <location>
        <begin position="587"/>
        <end position="607"/>
    </location>
</feature>
<sequence length="621" mass="72814">MVKKELEMYNLYTFQIDLDKKLLFEKADNQQNYSKIRARYFKNSARNQQAVFLNKNLIKNTFNKALLNFSDFLSGSGVESIFKQVIDDQPEVLNYLKQVKKEDSCDGHSEASQLVFNVVINPKNTLANFFEELTIYLHFNEENNTVVGSFSLKWNIKRADLFSETKNIAINNLIHTFCKNNLNEVSFIQIIKCFAKTLINKQGQIVLESCAFKQKWQNIVEQKYPFSTIHKNLKIVNSDFFDAFFVILLLICHLNNNLLWLCEKTEHFEWKLNSKISNFKEDNTEVYLSKMLLFLKDWYFENQAVTNEDIEKVDEVEDIGKLVEKYSANQPQKLSSNSTVYVFEPDKKQCFLKNDDFFNTNEAKLLFLITMQPNVFGLDDTAIANDLNLREIGDFFKEIDFTDSDVLNDFQQQKETLLVRRTFNQLLFMNSNTDVLSIVNNKFKSAIHNIVWTITYSKAIMLKAFDYSKIFEQNRTNDPSLLRSNLNSINRLRYLSEYFRTASVKYDQLYTKVKEYMQLDQFLVDMINQVNHEDEIFGKYKERVYLSLGIVTAVVFGIIEFFNCVWTVLTVSQQTAEKSLADPRNTVIIGIGTILVLTLLITILTFMTRRLYLFEFNKKHK</sequence>
<comment type="subcellular location">
    <subcellularLocation>
        <location evidence="2">Cell membrane</location>
        <topology evidence="2">Multi-pass membrane protein</topology>
    </subcellularLocation>
</comment>
<evidence type="ECO:0000255" key="1"/>
<evidence type="ECO:0000305" key="2"/>
<organism>
    <name type="scientific">Mycoplasma pneumoniae (strain ATCC 29342 / M129 / Subtype 1)</name>
    <name type="common">Mycoplasmoides pneumoniae</name>
    <dbReference type="NCBI Taxonomy" id="272634"/>
    <lineage>
        <taxon>Bacteria</taxon>
        <taxon>Bacillati</taxon>
        <taxon>Mycoplasmatota</taxon>
        <taxon>Mycoplasmoidales</taxon>
        <taxon>Mycoplasmoidaceae</taxon>
        <taxon>Mycoplasmoides</taxon>
    </lineage>
</organism>
<keyword id="KW-1003">Cell membrane</keyword>
<keyword id="KW-0472">Membrane</keyword>
<keyword id="KW-1185">Reference proteome</keyword>
<keyword id="KW-0812">Transmembrane</keyword>
<keyword id="KW-1133">Transmembrane helix</keyword>
<dbReference type="EMBL" id="U00089">
    <property type="protein sequence ID" value="AAB96147.1"/>
    <property type="molecule type" value="Genomic_DNA"/>
</dbReference>
<dbReference type="PIR" id="S73825">
    <property type="entry name" value="S73825"/>
</dbReference>
<dbReference type="RefSeq" id="NP_110025.1">
    <property type="nucleotide sequence ID" value="NC_000912.1"/>
</dbReference>
<dbReference type="RefSeq" id="WP_010874693.1">
    <property type="nucleotide sequence ID" value="NZ_OU342337.1"/>
</dbReference>
<dbReference type="SMR" id="P75441"/>
<dbReference type="IntAct" id="P75441">
    <property type="interactions" value="1"/>
</dbReference>
<dbReference type="STRING" id="272634.MPN_337"/>
<dbReference type="EnsemblBacteria" id="AAB96147">
    <property type="protein sequence ID" value="AAB96147"/>
    <property type="gene ID" value="MPN_337"/>
</dbReference>
<dbReference type="KEGG" id="mpn:MPN_337"/>
<dbReference type="PATRIC" id="fig|272634.6.peg.361"/>
<dbReference type="HOGENOM" id="CLU_440630_0_0_14"/>
<dbReference type="OrthoDB" id="396107at2"/>
<dbReference type="BioCyc" id="MPNE272634:G1GJ3-532-MONOMER"/>
<dbReference type="Proteomes" id="UP000000808">
    <property type="component" value="Chromosome"/>
</dbReference>
<dbReference type="GO" id="GO:0005886">
    <property type="term" value="C:plasma membrane"/>
    <property type="evidence" value="ECO:0007669"/>
    <property type="project" value="UniProtKB-SubCell"/>
</dbReference>
<dbReference type="InterPro" id="IPR054979">
    <property type="entry name" value="MPN337"/>
</dbReference>
<dbReference type="NCBIfam" id="NF045749">
    <property type="entry name" value="MPN337"/>
    <property type="match status" value="1"/>
</dbReference>
<dbReference type="NCBIfam" id="NF045750">
    <property type="entry name" value="MPN338"/>
    <property type="match status" value="1"/>
</dbReference>
<proteinExistence type="predicted"/>
<name>Y337_MYCPN</name>
<protein>
    <recommendedName>
        <fullName>Uncharacterized protein MG241 homolog</fullName>
    </recommendedName>
</protein>